<dbReference type="EMBL" id="X76904">
    <property type="protein sequence ID" value="CAA54225.1"/>
    <property type="molecule type" value="Genomic_DNA"/>
</dbReference>
<dbReference type="EMBL" id="DS571183">
    <property type="protein sequence ID" value="EAL50647.1"/>
    <property type="molecule type" value="Genomic_DNA"/>
</dbReference>
<dbReference type="PIR" id="S61439">
    <property type="entry name" value="S49145"/>
</dbReference>
<dbReference type="RefSeq" id="XP_656029.1">
    <property type="nucleotide sequence ID" value="XM_650937.2"/>
</dbReference>
<dbReference type="SMR" id="Q24825"/>
<dbReference type="TCDB" id="1.C.35.1.3">
    <property type="family name" value="the amoebapore (amoebapore) family"/>
</dbReference>
<dbReference type="EnsemblProtists" id="GAT94077">
    <property type="protein sequence ID" value="GAT94077"/>
    <property type="gene ID" value="CL6EHI_118270"/>
</dbReference>
<dbReference type="EnsemblProtists" id="rna_EHI_118270-1">
    <property type="protein sequence ID" value="rna_EHI_118270-1"/>
    <property type="gene ID" value="EHI_118270"/>
</dbReference>
<dbReference type="GeneID" id="3410347"/>
<dbReference type="KEGG" id="ehi:EHI_118270"/>
<dbReference type="VEuPathDB" id="AmoebaDB:EHI5A_228460"/>
<dbReference type="VEuPathDB" id="AmoebaDB:EHI_118270"/>
<dbReference type="VEuPathDB" id="AmoebaDB:KM1_313130"/>
<dbReference type="eggNOG" id="ENOG502RI0B">
    <property type="taxonomic scope" value="Eukaryota"/>
</dbReference>
<dbReference type="HOGENOM" id="CLU_2337976_0_0_1"/>
<dbReference type="OMA" id="ICLGSQE"/>
<dbReference type="OrthoDB" id="29337at2759"/>
<dbReference type="Proteomes" id="UP000001926">
    <property type="component" value="Partially assembled WGS sequence"/>
</dbReference>
<dbReference type="GO" id="GO:0042742">
    <property type="term" value="P:defense response to bacterium"/>
    <property type="evidence" value="ECO:0007669"/>
    <property type="project" value="UniProtKB-KW"/>
</dbReference>
<dbReference type="Gene3D" id="1.10.225.10">
    <property type="entry name" value="Saposin-like"/>
    <property type="match status" value="1"/>
</dbReference>
<dbReference type="InterPro" id="IPR008138">
    <property type="entry name" value="SapB_2"/>
</dbReference>
<dbReference type="InterPro" id="IPR011001">
    <property type="entry name" value="Saposin-like"/>
</dbReference>
<dbReference type="InterPro" id="IPR008139">
    <property type="entry name" value="SaposinB_dom"/>
</dbReference>
<dbReference type="Pfam" id="PF03489">
    <property type="entry name" value="SapB_2"/>
    <property type="match status" value="1"/>
</dbReference>
<dbReference type="SMART" id="SM00741">
    <property type="entry name" value="SapB"/>
    <property type="match status" value="1"/>
</dbReference>
<dbReference type="SUPFAM" id="SSF47862">
    <property type="entry name" value="Saposin"/>
    <property type="match status" value="1"/>
</dbReference>
<dbReference type="PROSITE" id="PS50015">
    <property type="entry name" value="SAP_B"/>
    <property type="match status" value="1"/>
</dbReference>
<keyword id="KW-0044">Antibiotic</keyword>
<keyword id="KW-0929">Antimicrobial</keyword>
<keyword id="KW-0903">Direct protein sequencing</keyword>
<keyword id="KW-1015">Disulfide bond</keyword>
<keyword id="KW-1185">Reference proteome</keyword>
<keyword id="KW-0732">Signal</keyword>
<proteinExistence type="evidence at protein level"/>
<accession>Q24825</accession>
<accession>A0A175JKC1</accession>
<accession>C4LZ09</accession>
<protein>
    <recommendedName>
        <fullName evidence="5">Pore-forming peptide amoebapore C</fullName>
    </recommendedName>
    <alternativeName>
        <fullName>EH-APP C</fullName>
    </alternativeName>
</protein>
<organism evidence="6">
    <name type="scientific">Entamoeba histolytica (strain ATCC 30459 / HM-1:IMSS / ABRM)</name>
    <dbReference type="NCBI Taxonomy" id="294381"/>
    <lineage>
        <taxon>Eukaryota</taxon>
        <taxon>Amoebozoa</taxon>
        <taxon>Evosea</taxon>
        <taxon>Archamoebae</taxon>
        <taxon>Mastigamoebida</taxon>
        <taxon>Entamoebidae</taxon>
        <taxon>Entamoeba</taxon>
    </lineage>
</organism>
<evidence type="ECO:0000250" key="1">
    <source>
        <dbReference type="UniProtKB" id="P34095"/>
    </source>
</evidence>
<evidence type="ECO:0000255" key="2">
    <source>
        <dbReference type="PROSITE-ProRule" id="PRU00415"/>
    </source>
</evidence>
<evidence type="ECO:0000269" key="3">
    <source>
    </source>
</evidence>
<evidence type="ECO:0000269" key="4">
    <source>
    </source>
</evidence>
<evidence type="ECO:0000303" key="5">
    <source>
    </source>
</evidence>
<evidence type="ECO:0000312" key="6">
    <source>
        <dbReference type="EMBL" id="EAL50647.1"/>
    </source>
</evidence>
<feature type="signal peptide" evidence="4">
    <location>
        <begin position="1"/>
        <end position="24"/>
    </location>
</feature>
<feature type="peptide" id="PRO_0000031670" description="Pore-forming peptide amoebapore C">
    <location>
        <begin position="25"/>
        <end position="101"/>
    </location>
</feature>
<feature type="domain" description="Saposin B-type" evidence="2">
    <location>
        <begin position="25"/>
        <end position="101"/>
    </location>
</feature>
<feature type="disulfide bond" evidence="2">
    <location>
        <begin position="29"/>
        <end position="101"/>
    </location>
</feature>
<feature type="disulfide bond" evidence="2">
    <location>
        <begin position="32"/>
        <end position="95"/>
    </location>
</feature>
<feature type="disulfide bond" evidence="2">
    <location>
        <begin position="59"/>
        <end position="70"/>
    </location>
</feature>
<name>PFPC_ENTH1</name>
<gene>
    <name evidence="6" type="ORF">EHI_118270</name>
</gene>
<sequence length="101" mass="10855">MKLFVLLCVFVLCLASQEKQQDREIPVLCPVCTSLVGKLIDLVLGGAVDKVTDYLETLCAKADGLVETLCTKIVSYGIDKLIEKILEGGSAKLICGLIHAC</sequence>
<comment type="function">
    <text evidence="4">Forms pores in the cell membrane of host cells (PubMed:7715451). Has antibacterial activity against M.luteus, no activity against E.coli (PubMed:7715451). Implicated in the cytolytic activity of the parasite (PubMed:7715451).</text>
</comment>
<comment type="subunit">
    <text evidence="1">Monomer (By similarity). Homodimer (By similarity). Hexamer; formed during insertion in the membrane (By similarity).</text>
</comment>
<comment type="subcellular location">
    <subcellularLocation>
        <location evidence="3">Cytoplasmic granule</location>
    </subcellularLocation>
</comment>
<comment type="developmental stage">
    <text evidence="4">Expressed in trophozoites (at protein level).</text>
</comment>
<reference key="1">
    <citation type="journal article" date="1994" name="Mol. Microbiol.">
        <title>Amoebapores, a family of membranolytic peptides from cytoplasmic granules of Entamoeba histolytica: isolation, primary structure, and pore formation in bacterial cytoplasmic membranes.</title>
        <authorList>
            <person name="Leippe M."/>
            <person name="Andrae J."/>
            <person name="Nickel R."/>
            <person name="Tannich E."/>
            <person name="Mueller-Eberhard H.J."/>
        </authorList>
    </citation>
    <scope>NUCLEOTIDE SEQUENCE [GENOMIC DNA]</scope>
    <scope>PROTEIN SEQUENCE OF 25-69</scope>
    <scope>FUNCTION</scope>
    <scope>SUBCELLULAR LOCATION</scope>
    <scope>DEVELOPMENTAL STAGE</scope>
    <source>
        <strain>ATCC 30459 / HM-1:IMSS / ABRM</strain>
    </source>
</reference>
<reference evidence="6" key="2">
    <citation type="journal article" date="2005" name="Nature">
        <title>The genome of the protist parasite Entamoeba histolytica.</title>
        <authorList>
            <person name="Loftus B.J."/>
            <person name="Anderson I."/>
            <person name="Davies R."/>
            <person name="Alsmark U.C."/>
            <person name="Samuelson J."/>
            <person name="Amedeo P."/>
            <person name="Roncaglia P."/>
            <person name="Berriman M."/>
            <person name="Hirt R.P."/>
            <person name="Mann B.J."/>
            <person name="Nozaki T."/>
            <person name="Suh B."/>
            <person name="Pop M."/>
            <person name="Duchene M."/>
            <person name="Ackers J."/>
            <person name="Tannich E."/>
            <person name="Leippe M."/>
            <person name="Hofer M."/>
            <person name="Bruchhaus I."/>
            <person name="Willhoeft U."/>
            <person name="Bhattacharya A."/>
            <person name="Chillingworth T."/>
            <person name="Churcher C.M."/>
            <person name="Hance Z."/>
            <person name="Harris B."/>
            <person name="Harris D."/>
            <person name="Jagels K."/>
            <person name="Moule S."/>
            <person name="Mungall K.L."/>
            <person name="Ormond D."/>
            <person name="Squares R."/>
            <person name="Whitehead S."/>
            <person name="Quail M.A."/>
            <person name="Rabbinowitsch E."/>
            <person name="Norbertczak H."/>
            <person name="Price C."/>
            <person name="Wang Z."/>
            <person name="Guillen N."/>
            <person name="Gilchrist C."/>
            <person name="Stroup S.E."/>
            <person name="Bhattacharya S."/>
            <person name="Lohia A."/>
            <person name="Foster P.G."/>
            <person name="Sicheritz-Ponten T."/>
            <person name="Weber C."/>
            <person name="Singh U."/>
            <person name="Mukherjee C."/>
            <person name="El-Sayed N.M.A."/>
            <person name="Petri W.A."/>
            <person name="Clark C.G."/>
            <person name="Embley T.M."/>
            <person name="Barrell B.G."/>
            <person name="Fraser C.M."/>
            <person name="Hall N."/>
        </authorList>
    </citation>
    <scope>NUCLEOTIDE SEQUENCE [LARGE SCALE GENOMIC DNA]</scope>
    <source>
        <strain evidence="6">ATCC 30459 / HM-1:IMSS / ABRM</strain>
    </source>
</reference>